<gene>
    <name evidence="1" type="primary">tig</name>
    <name type="ordered locus">Bcav_2599</name>
</gene>
<dbReference type="EC" id="5.2.1.8" evidence="1"/>
<dbReference type="EMBL" id="CP001618">
    <property type="protein sequence ID" value="ACQ80844.1"/>
    <property type="molecule type" value="Genomic_DNA"/>
</dbReference>
<dbReference type="RefSeq" id="WP_015883084.1">
    <property type="nucleotide sequence ID" value="NC_012669.1"/>
</dbReference>
<dbReference type="SMR" id="C5BXG1"/>
<dbReference type="STRING" id="471853.Bcav_2599"/>
<dbReference type="KEGG" id="bcv:Bcav_2599"/>
<dbReference type="eggNOG" id="COG0544">
    <property type="taxonomic scope" value="Bacteria"/>
</dbReference>
<dbReference type="HOGENOM" id="CLU_033058_3_0_11"/>
<dbReference type="OrthoDB" id="9767721at2"/>
<dbReference type="Proteomes" id="UP000007962">
    <property type="component" value="Chromosome"/>
</dbReference>
<dbReference type="GO" id="GO:0005737">
    <property type="term" value="C:cytoplasm"/>
    <property type="evidence" value="ECO:0007669"/>
    <property type="project" value="UniProtKB-SubCell"/>
</dbReference>
<dbReference type="GO" id="GO:0003755">
    <property type="term" value="F:peptidyl-prolyl cis-trans isomerase activity"/>
    <property type="evidence" value="ECO:0007669"/>
    <property type="project" value="UniProtKB-UniRule"/>
</dbReference>
<dbReference type="GO" id="GO:0044183">
    <property type="term" value="F:protein folding chaperone"/>
    <property type="evidence" value="ECO:0007669"/>
    <property type="project" value="TreeGrafter"/>
</dbReference>
<dbReference type="GO" id="GO:0043022">
    <property type="term" value="F:ribosome binding"/>
    <property type="evidence" value="ECO:0007669"/>
    <property type="project" value="TreeGrafter"/>
</dbReference>
<dbReference type="GO" id="GO:0051083">
    <property type="term" value="P:'de novo' cotranslational protein folding"/>
    <property type="evidence" value="ECO:0007669"/>
    <property type="project" value="TreeGrafter"/>
</dbReference>
<dbReference type="GO" id="GO:0051301">
    <property type="term" value="P:cell division"/>
    <property type="evidence" value="ECO:0007669"/>
    <property type="project" value="UniProtKB-KW"/>
</dbReference>
<dbReference type="GO" id="GO:0061077">
    <property type="term" value="P:chaperone-mediated protein folding"/>
    <property type="evidence" value="ECO:0007669"/>
    <property type="project" value="TreeGrafter"/>
</dbReference>
<dbReference type="GO" id="GO:0015031">
    <property type="term" value="P:protein transport"/>
    <property type="evidence" value="ECO:0007669"/>
    <property type="project" value="UniProtKB-UniRule"/>
</dbReference>
<dbReference type="GO" id="GO:0043335">
    <property type="term" value="P:protein unfolding"/>
    <property type="evidence" value="ECO:0007669"/>
    <property type="project" value="TreeGrafter"/>
</dbReference>
<dbReference type="Gene3D" id="3.10.50.40">
    <property type="match status" value="1"/>
</dbReference>
<dbReference type="Gene3D" id="3.30.70.1050">
    <property type="entry name" value="Trigger factor ribosome-binding domain"/>
    <property type="match status" value="1"/>
</dbReference>
<dbReference type="Gene3D" id="1.10.3120.10">
    <property type="entry name" value="Trigger factor, C-terminal domain"/>
    <property type="match status" value="1"/>
</dbReference>
<dbReference type="HAMAP" id="MF_00303">
    <property type="entry name" value="Trigger_factor_Tig"/>
    <property type="match status" value="1"/>
</dbReference>
<dbReference type="InterPro" id="IPR046357">
    <property type="entry name" value="PPIase_dom_sf"/>
</dbReference>
<dbReference type="InterPro" id="IPR001179">
    <property type="entry name" value="PPIase_FKBP_dom"/>
</dbReference>
<dbReference type="InterPro" id="IPR005215">
    <property type="entry name" value="Trig_fac"/>
</dbReference>
<dbReference type="InterPro" id="IPR008880">
    <property type="entry name" value="Trigger_fac_C"/>
</dbReference>
<dbReference type="InterPro" id="IPR037041">
    <property type="entry name" value="Trigger_fac_C_sf"/>
</dbReference>
<dbReference type="InterPro" id="IPR008881">
    <property type="entry name" value="Trigger_fac_ribosome-bd_bac"/>
</dbReference>
<dbReference type="InterPro" id="IPR036611">
    <property type="entry name" value="Trigger_fac_ribosome-bd_sf"/>
</dbReference>
<dbReference type="InterPro" id="IPR027304">
    <property type="entry name" value="Trigger_fact/SurA_dom_sf"/>
</dbReference>
<dbReference type="NCBIfam" id="TIGR00115">
    <property type="entry name" value="tig"/>
    <property type="match status" value="1"/>
</dbReference>
<dbReference type="PANTHER" id="PTHR30560">
    <property type="entry name" value="TRIGGER FACTOR CHAPERONE AND PEPTIDYL-PROLYL CIS/TRANS ISOMERASE"/>
    <property type="match status" value="1"/>
</dbReference>
<dbReference type="PANTHER" id="PTHR30560:SF3">
    <property type="entry name" value="TRIGGER FACTOR-LIKE PROTEIN TIG, CHLOROPLASTIC"/>
    <property type="match status" value="1"/>
</dbReference>
<dbReference type="Pfam" id="PF00254">
    <property type="entry name" value="FKBP_C"/>
    <property type="match status" value="1"/>
</dbReference>
<dbReference type="Pfam" id="PF05698">
    <property type="entry name" value="Trigger_C"/>
    <property type="match status" value="1"/>
</dbReference>
<dbReference type="Pfam" id="PF05697">
    <property type="entry name" value="Trigger_N"/>
    <property type="match status" value="1"/>
</dbReference>
<dbReference type="PIRSF" id="PIRSF003095">
    <property type="entry name" value="Trigger_factor"/>
    <property type="match status" value="1"/>
</dbReference>
<dbReference type="SUPFAM" id="SSF54534">
    <property type="entry name" value="FKBP-like"/>
    <property type="match status" value="1"/>
</dbReference>
<dbReference type="SUPFAM" id="SSF109998">
    <property type="entry name" value="Triger factor/SurA peptide-binding domain-like"/>
    <property type="match status" value="1"/>
</dbReference>
<dbReference type="SUPFAM" id="SSF102735">
    <property type="entry name" value="Trigger factor ribosome-binding domain"/>
    <property type="match status" value="1"/>
</dbReference>
<dbReference type="PROSITE" id="PS50059">
    <property type="entry name" value="FKBP_PPIASE"/>
    <property type="match status" value="1"/>
</dbReference>
<comment type="function">
    <text evidence="1">Involved in protein export. Acts as a chaperone by maintaining the newly synthesized protein in an open conformation. Functions as a peptidyl-prolyl cis-trans isomerase.</text>
</comment>
<comment type="catalytic activity">
    <reaction evidence="1">
        <text>[protein]-peptidylproline (omega=180) = [protein]-peptidylproline (omega=0)</text>
        <dbReference type="Rhea" id="RHEA:16237"/>
        <dbReference type="Rhea" id="RHEA-COMP:10747"/>
        <dbReference type="Rhea" id="RHEA-COMP:10748"/>
        <dbReference type="ChEBI" id="CHEBI:83833"/>
        <dbReference type="ChEBI" id="CHEBI:83834"/>
        <dbReference type="EC" id="5.2.1.8"/>
    </reaction>
</comment>
<comment type="subcellular location">
    <subcellularLocation>
        <location>Cytoplasm</location>
    </subcellularLocation>
    <text evidence="1">About half TF is bound to the ribosome near the polypeptide exit tunnel while the other half is free in the cytoplasm.</text>
</comment>
<comment type="domain">
    <text evidence="1">Consists of 3 domains; the N-terminus binds the ribosome, the middle domain has PPIase activity, while the C-terminus has intrinsic chaperone activity on its own.</text>
</comment>
<comment type="similarity">
    <text evidence="1">Belongs to the FKBP-type PPIase family. Tig subfamily.</text>
</comment>
<accession>C5BXG1</accession>
<protein>
    <recommendedName>
        <fullName evidence="1">Trigger factor</fullName>
        <shortName evidence="1">TF</shortName>
        <ecNumber evidence="1">5.2.1.8</ecNumber>
    </recommendedName>
    <alternativeName>
        <fullName evidence="1">PPIase</fullName>
    </alternativeName>
</protein>
<organism>
    <name type="scientific">Beutenbergia cavernae (strain ATCC BAA-8 / DSM 12333 / CCUG 43141 / JCM 11478 / NBRC 16432 / NCIMB 13614 / HKI 0122)</name>
    <dbReference type="NCBI Taxonomy" id="471853"/>
    <lineage>
        <taxon>Bacteria</taxon>
        <taxon>Bacillati</taxon>
        <taxon>Actinomycetota</taxon>
        <taxon>Actinomycetes</taxon>
        <taxon>Micrococcales</taxon>
        <taxon>Beutenbergiaceae</taxon>
        <taxon>Beutenbergia</taxon>
    </lineage>
</organism>
<proteinExistence type="inferred from homology"/>
<name>TIG_BEUC1</name>
<sequence length="470" mass="50868">MKSAVENLEPTRVKLTVEVAFDELKASLDHAYQHIAQQVNVPGFRKGKVPPRVIDQRVGRAAVVEHAVNDALPDFYRQAVTESELKVLGQPEVEVTGVPDTTSGELTFTAEVDVRPDFTLPALADLELEVDDVAVTDDDVAERLDLLRQRYGTLTGVDRAAETGDYVVIDMTATIDGEEVDTVSGVSYEIGSGNMLDGLDEALVGLAADETATFSAPLAGGDRAGEAADVSVTVTAVKVQELPEADDDFAQLASEFDTLEELQADLRTQISDAKVNNQAVQARDRLLEKLVEATDFPLPQGVIEAEIHRHLESEGRLEDDEHREEVREEATQALRRQLVLDVLADQVSVQVNQNELVEFLLRTAQQYRVDPNEFITNADKTGQIPSFVAELARNKSLAVALRDVRVVDASGNAVDLTSFIGSEETDAEDAAEGVESVEVDLSAAAEDDAEETSDEPAAEDTATEDEAAKA</sequence>
<reference key="1">
    <citation type="journal article" date="2009" name="Stand. Genomic Sci.">
        <title>Complete genome sequence of Beutenbergia cavernae type strain (HKI 0122).</title>
        <authorList>
            <person name="Land M."/>
            <person name="Pukall R."/>
            <person name="Abt B."/>
            <person name="Goker M."/>
            <person name="Rohde M."/>
            <person name="Glavina Del Rio T."/>
            <person name="Tice H."/>
            <person name="Copeland A."/>
            <person name="Cheng J.F."/>
            <person name="Lucas S."/>
            <person name="Chen F."/>
            <person name="Nolan M."/>
            <person name="Bruce D."/>
            <person name="Goodwin L."/>
            <person name="Pitluck S."/>
            <person name="Ivanova N."/>
            <person name="Mavromatis K."/>
            <person name="Ovchinnikova G."/>
            <person name="Pati A."/>
            <person name="Chen A."/>
            <person name="Palaniappan K."/>
            <person name="Hauser L."/>
            <person name="Chang Y.J."/>
            <person name="Jefferies C.C."/>
            <person name="Saunders E."/>
            <person name="Brettin T."/>
            <person name="Detter J.C."/>
            <person name="Han C."/>
            <person name="Chain P."/>
            <person name="Bristow J."/>
            <person name="Eisen J.A."/>
            <person name="Markowitz V."/>
            <person name="Hugenholtz P."/>
            <person name="Kyrpides N.C."/>
            <person name="Klenk H.P."/>
            <person name="Lapidus A."/>
        </authorList>
    </citation>
    <scope>NUCLEOTIDE SEQUENCE [LARGE SCALE GENOMIC DNA]</scope>
    <source>
        <strain>ATCC BAA-8 / DSM 12333 / CCUG 43141 / JCM 11478 / NBRC 16432 / NCIMB 13614 / HKI 0122</strain>
    </source>
</reference>
<feature type="chain" id="PRO_1000204979" description="Trigger factor">
    <location>
        <begin position="1"/>
        <end position="470"/>
    </location>
</feature>
<feature type="domain" description="PPIase FKBP-type" evidence="1">
    <location>
        <begin position="164"/>
        <end position="243"/>
    </location>
</feature>
<feature type="region of interest" description="Disordered" evidence="2">
    <location>
        <begin position="424"/>
        <end position="470"/>
    </location>
</feature>
<feature type="compositionally biased region" description="Acidic residues" evidence="2">
    <location>
        <begin position="424"/>
        <end position="438"/>
    </location>
</feature>
<feature type="compositionally biased region" description="Acidic residues" evidence="2">
    <location>
        <begin position="445"/>
        <end position="470"/>
    </location>
</feature>
<keyword id="KW-0131">Cell cycle</keyword>
<keyword id="KW-0132">Cell division</keyword>
<keyword id="KW-0143">Chaperone</keyword>
<keyword id="KW-0963">Cytoplasm</keyword>
<keyword id="KW-0413">Isomerase</keyword>
<keyword id="KW-1185">Reference proteome</keyword>
<keyword id="KW-0697">Rotamase</keyword>
<evidence type="ECO:0000255" key="1">
    <source>
        <dbReference type="HAMAP-Rule" id="MF_00303"/>
    </source>
</evidence>
<evidence type="ECO:0000256" key="2">
    <source>
        <dbReference type="SAM" id="MobiDB-lite"/>
    </source>
</evidence>